<protein>
    <recommendedName>
        <fullName evidence="1">dTTP/UTP pyrophosphatase</fullName>
        <shortName evidence="1">dTTPase/UTPase</shortName>
        <ecNumber evidence="1">3.6.1.9</ecNumber>
    </recommendedName>
    <alternativeName>
        <fullName evidence="1">Nucleoside triphosphate pyrophosphatase</fullName>
    </alternativeName>
    <alternativeName>
        <fullName evidence="1">Nucleotide pyrophosphatase</fullName>
        <shortName evidence="1">Nucleotide PPase</shortName>
    </alternativeName>
</protein>
<reference key="1">
    <citation type="journal article" date="2004" name="Proc. Natl. Acad. Sci. U.S.A.">
        <title>Genome sequence of the deep-sea gamma-proteobacterium Idiomarina loihiensis reveals amino acid fermentation as a source of carbon and energy.</title>
        <authorList>
            <person name="Hou S."/>
            <person name="Saw J.H."/>
            <person name="Lee K.S."/>
            <person name="Freitas T.A."/>
            <person name="Belisle C."/>
            <person name="Kawarabayasi Y."/>
            <person name="Donachie S.P."/>
            <person name="Pikina A."/>
            <person name="Galperin M.Y."/>
            <person name="Koonin E.V."/>
            <person name="Makarova K.S."/>
            <person name="Omelchenko M.V."/>
            <person name="Sorokin A."/>
            <person name="Wolf Y.I."/>
            <person name="Li Q.X."/>
            <person name="Keum Y.S."/>
            <person name="Campbell S."/>
            <person name="Denery J."/>
            <person name="Aizawa S."/>
            <person name="Shibata S."/>
            <person name="Malahoff A."/>
            <person name="Alam M."/>
        </authorList>
    </citation>
    <scope>NUCLEOTIDE SEQUENCE [LARGE SCALE GENOMIC DNA]</scope>
    <source>
        <strain>ATCC BAA-735 / DSM 15497 / L2-TR</strain>
    </source>
</reference>
<proteinExistence type="inferred from homology"/>
<dbReference type="EC" id="3.6.1.9" evidence="1"/>
<dbReference type="EMBL" id="AE017340">
    <property type="protein sequence ID" value="AAV81227.1"/>
    <property type="molecule type" value="Genomic_DNA"/>
</dbReference>
<dbReference type="RefSeq" id="WP_011233645.1">
    <property type="nucleotide sequence ID" value="NC_006512.1"/>
</dbReference>
<dbReference type="SMR" id="Q5QWE2"/>
<dbReference type="STRING" id="283942.IL0384"/>
<dbReference type="GeneID" id="41335536"/>
<dbReference type="KEGG" id="ilo:IL0384"/>
<dbReference type="eggNOG" id="COG0424">
    <property type="taxonomic scope" value="Bacteria"/>
</dbReference>
<dbReference type="HOGENOM" id="CLU_040416_2_1_6"/>
<dbReference type="OrthoDB" id="9807767at2"/>
<dbReference type="Proteomes" id="UP000001171">
    <property type="component" value="Chromosome"/>
</dbReference>
<dbReference type="GO" id="GO:0005737">
    <property type="term" value="C:cytoplasm"/>
    <property type="evidence" value="ECO:0007669"/>
    <property type="project" value="UniProtKB-SubCell"/>
</dbReference>
<dbReference type="GO" id="GO:0036218">
    <property type="term" value="F:dTTP diphosphatase activity"/>
    <property type="evidence" value="ECO:0007669"/>
    <property type="project" value="RHEA"/>
</dbReference>
<dbReference type="GO" id="GO:0036221">
    <property type="term" value="F:UTP diphosphatase activity"/>
    <property type="evidence" value="ECO:0007669"/>
    <property type="project" value="RHEA"/>
</dbReference>
<dbReference type="GO" id="GO:0009117">
    <property type="term" value="P:nucleotide metabolic process"/>
    <property type="evidence" value="ECO:0007669"/>
    <property type="project" value="UniProtKB-KW"/>
</dbReference>
<dbReference type="CDD" id="cd00555">
    <property type="entry name" value="Maf"/>
    <property type="match status" value="1"/>
</dbReference>
<dbReference type="Gene3D" id="3.90.950.10">
    <property type="match status" value="1"/>
</dbReference>
<dbReference type="HAMAP" id="MF_00528">
    <property type="entry name" value="Maf"/>
    <property type="match status" value="1"/>
</dbReference>
<dbReference type="InterPro" id="IPR029001">
    <property type="entry name" value="ITPase-like_fam"/>
</dbReference>
<dbReference type="InterPro" id="IPR003697">
    <property type="entry name" value="Maf-like"/>
</dbReference>
<dbReference type="NCBIfam" id="TIGR00172">
    <property type="entry name" value="maf"/>
    <property type="match status" value="1"/>
</dbReference>
<dbReference type="PANTHER" id="PTHR43213">
    <property type="entry name" value="BIFUNCTIONAL DTTP/UTP PYROPHOSPHATASE/METHYLTRANSFERASE PROTEIN-RELATED"/>
    <property type="match status" value="1"/>
</dbReference>
<dbReference type="PANTHER" id="PTHR43213:SF5">
    <property type="entry name" value="BIFUNCTIONAL DTTP_UTP PYROPHOSPHATASE_METHYLTRANSFERASE PROTEIN-RELATED"/>
    <property type="match status" value="1"/>
</dbReference>
<dbReference type="Pfam" id="PF02545">
    <property type="entry name" value="Maf"/>
    <property type="match status" value="1"/>
</dbReference>
<dbReference type="PIRSF" id="PIRSF006305">
    <property type="entry name" value="Maf"/>
    <property type="match status" value="1"/>
</dbReference>
<dbReference type="SUPFAM" id="SSF52972">
    <property type="entry name" value="ITPase-like"/>
    <property type="match status" value="1"/>
</dbReference>
<evidence type="ECO:0000255" key="1">
    <source>
        <dbReference type="HAMAP-Rule" id="MF_00528"/>
    </source>
</evidence>
<sequence>MRLLLASSSPRRRELLTLLHRPFDCEVPEVEELRGANENAGDYVTRLAEEKAQTVAQRQQTPCLVIGSDTLISFKGQVLEKPESYEHFSQMMKQLSGQTHQVLTSVSVCQWNGHKVVARETALVTTQVEFAALSQGEIDAYWATGEPHDKAAGYGIQGYGGKFVKRIEGSYFAVVGLPLYETEQLLRMFEMTGEVDER</sequence>
<keyword id="KW-0963">Cytoplasm</keyword>
<keyword id="KW-0378">Hydrolase</keyword>
<keyword id="KW-0546">Nucleotide metabolism</keyword>
<keyword id="KW-1185">Reference proteome</keyword>
<gene>
    <name type="ordered locus">IL0384</name>
</gene>
<name>NTPPA_IDILO</name>
<feature type="chain" id="PRO_0000267323" description="dTTP/UTP pyrophosphatase">
    <location>
        <begin position="1"/>
        <end position="198"/>
    </location>
</feature>
<feature type="active site" description="Proton acceptor" evidence="1">
    <location>
        <position position="69"/>
    </location>
</feature>
<feature type="site" description="Important for substrate specificity" evidence="1">
    <location>
        <position position="11"/>
    </location>
</feature>
<feature type="site" description="Important for substrate specificity" evidence="1">
    <location>
        <position position="70"/>
    </location>
</feature>
<feature type="site" description="Important for substrate specificity" evidence="1">
    <location>
        <position position="157"/>
    </location>
</feature>
<organism>
    <name type="scientific">Idiomarina loihiensis (strain ATCC BAA-735 / DSM 15497 / L2-TR)</name>
    <dbReference type="NCBI Taxonomy" id="283942"/>
    <lineage>
        <taxon>Bacteria</taxon>
        <taxon>Pseudomonadati</taxon>
        <taxon>Pseudomonadota</taxon>
        <taxon>Gammaproteobacteria</taxon>
        <taxon>Alteromonadales</taxon>
        <taxon>Idiomarinaceae</taxon>
        <taxon>Idiomarina</taxon>
    </lineage>
</organism>
<comment type="function">
    <text evidence="1">Nucleoside triphosphate pyrophosphatase that hydrolyzes dTTP and UTP. May have a dual role in cell division arrest and in preventing the incorporation of modified nucleotides into cellular nucleic acids.</text>
</comment>
<comment type="catalytic activity">
    <reaction evidence="1">
        <text>dTTP + H2O = dTMP + diphosphate + H(+)</text>
        <dbReference type="Rhea" id="RHEA:28534"/>
        <dbReference type="ChEBI" id="CHEBI:15377"/>
        <dbReference type="ChEBI" id="CHEBI:15378"/>
        <dbReference type="ChEBI" id="CHEBI:33019"/>
        <dbReference type="ChEBI" id="CHEBI:37568"/>
        <dbReference type="ChEBI" id="CHEBI:63528"/>
        <dbReference type="EC" id="3.6.1.9"/>
    </reaction>
</comment>
<comment type="catalytic activity">
    <reaction evidence="1">
        <text>UTP + H2O = UMP + diphosphate + H(+)</text>
        <dbReference type="Rhea" id="RHEA:29395"/>
        <dbReference type="ChEBI" id="CHEBI:15377"/>
        <dbReference type="ChEBI" id="CHEBI:15378"/>
        <dbReference type="ChEBI" id="CHEBI:33019"/>
        <dbReference type="ChEBI" id="CHEBI:46398"/>
        <dbReference type="ChEBI" id="CHEBI:57865"/>
        <dbReference type="EC" id="3.6.1.9"/>
    </reaction>
</comment>
<comment type="cofactor">
    <cofactor evidence="1">
        <name>a divalent metal cation</name>
        <dbReference type="ChEBI" id="CHEBI:60240"/>
    </cofactor>
</comment>
<comment type="subcellular location">
    <subcellularLocation>
        <location evidence="1">Cytoplasm</location>
    </subcellularLocation>
</comment>
<comment type="similarity">
    <text evidence="1">Belongs to the Maf family. YhdE subfamily.</text>
</comment>
<accession>Q5QWE2</accession>